<organism>
    <name type="scientific">Yersinia enterocolitica serotype O:8 / biotype 1B (strain NCTC 13174 / 8081)</name>
    <dbReference type="NCBI Taxonomy" id="393305"/>
    <lineage>
        <taxon>Bacteria</taxon>
        <taxon>Pseudomonadati</taxon>
        <taxon>Pseudomonadota</taxon>
        <taxon>Gammaproteobacteria</taxon>
        <taxon>Enterobacterales</taxon>
        <taxon>Yersiniaceae</taxon>
        <taxon>Yersinia</taxon>
    </lineage>
</organism>
<proteinExistence type="inferred from homology"/>
<gene>
    <name evidence="1" type="primary">hdfR</name>
    <name type="ordered locus">YE0145</name>
</gene>
<dbReference type="EMBL" id="AM286415">
    <property type="protein sequence ID" value="CAL10285.1"/>
    <property type="molecule type" value="Genomic_DNA"/>
</dbReference>
<dbReference type="RefSeq" id="WP_005176097.1">
    <property type="nucleotide sequence ID" value="NC_008800.1"/>
</dbReference>
<dbReference type="RefSeq" id="YP_001004537.1">
    <property type="nucleotide sequence ID" value="NC_008800.1"/>
</dbReference>
<dbReference type="SMR" id="A1JI47"/>
<dbReference type="KEGG" id="yen:YE0145"/>
<dbReference type="PATRIC" id="fig|393305.7.peg.236"/>
<dbReference type="eggNOG" id="COG0583">
    <property type="taxonomic scope" value="Bacteria"/>
</dbReference>
<dbReference type="HOGENOM" id="CLU_039613_8_2_6"/>
<dbReference type="OrthoDB" id="9786526at2"/>
<dbReference type="Proteomes" id="UP000000642">
    <property type="component" value="Chromosome"/>
</dbReference>
<dbReference type="GO" id="GO:0003677">
    <property type="term" value="F:DNA binding"/>
    <property type="evidence" value="ECO:0007669"/>
    <property type="project" value="UniProtKB-KW"/>
</dbReference>
<dbReference type="GO" id="GO:0003700">
    <property type="term" value="F:DNA-binding transcription factor activity"/>
    <property type="evidence" value="ECO:0007669"/>
    <property type="project" value="UniProtKB-UniRule"/>
</dbReference>
<dbReference type="GO" id="GO:0045892">
    <property type="term" value="P:negative regulation of DNA-templated transcription"/>
    <property type="evidence" value="ECO:0007669"/>
    <property type="project" value="UniProtKB-UniRule"/>
</dbReference>
<dbReference type="CDD" id="cd05466">
    <property type="entry name" value="PBP2_LTTR_substrate"/>
    <property type="match status" value="1"/>
</dbReference>
<dbReference type="FunFam" id="1.10.10.10:FF:000001">
    <property type="entry name" value="LysR family transcriptional regulator"/>
    <property type="match status" value="1"/>
</dbReference>
<dbReference type="Gene3D" id="3.40.190.10">
    <property type="entry name" value="Periplasmic binding protein-like II"/>
    <property type="match status" value="2"/>
</dbReference>
<dbReference type="Gene3D" id="1.10.10.10">
    <property type="entry name" value="Winged helix-like DNA-binding domain superfamily/Winged helix DNA-binding domain"/>
    <property type="match status" value="1"/>
</dbReference>
<dbReference type="HAMAP" id="MF_01233">
    <property type="entry name" value="HTH_type_HdfR"/>
    <property type="match status" value="1"/>
</dbReference>
<dbReference type="InterPro" id="IPR050176">
    <property type="entry name" value="LTTR"/>
</dbReference>
<dbReference type="InterPro" id="IPR005119">
    <property type="entry name" value="LysR_subst-bd"/>
</dbReference>
<dbReference type="InterPro" id="IPR020890">
    <property type="entry name" value="Tscrpt_reg_HTH_HdfR"/>
</dbReference>
<dbReference type="InterPro" id="IPR000847">
    <property type="entry name" value="Tscrpt_reg_HTH_LysR"/>
</dbReference>
<dbReference type="InterPro" id="IPR036388">
    <property type="entry name" value="WH-like_DNA-bd_sf"/>
</dbReference>
<dbReference type="InterPro" id="IPR036390">
    <property type="entry name" value="WH_DNA-bd_sf"/>
</dbReference>
<dbReference type="NCBIfam" id="NF002946">
    <property type="entry name" value="PRK03601.1"/>
    <property type="match status" value="1"/>
</dbReference>
<dbReference type="PANTHER" id="PTHR30579:SF8">
    <property type="entry name" value="HTH-TYPE TRANSCRIPTIONAL REGULATOR HDFR"/>
    <property type="match status" value="1"/>
</dbReference>
<dbReference type="PANTHER" id="PTHR30579">
    <property type="entry name" value="TRANSCRIPTIONAL REGULATOR"/>
    <property type="match status" value="1"/>
</dbReference>
<dbReference type="Pfam" id="PF00126">
    <property type="entry name" value="HTH_1"/>
    <property type="match status" value="1"/>
</dbReference>
<dbReference type="Pfam" id="PF03466">
    <property type="entry name" value="LysR_substrate"/>
    <property type="match status" value="1"/>
</dbReference>
<dbReference type="PRINTS" id="PR00039">
    <property type="entry name" value="HTHLYSR"/>
</dbReference>
<dbReference type="SUPFAM" id="SSF53850">
    <property type="entry name" value="Periplasmic binding protein-like II"/>
    <property type="match status" value="1"/>
</dbReference>
<dbReference type="SUPFAM" id="SSF46785">
    <property type="entry name" value="Winged helix' DNA-binding domain"/>
    <property type="match status" value="1"/>
</dbReference>
<dbReference type="PROSITE" id="PS50931">
    <property type="entry name" value="HTH_LYSR"/>
    <property type="match status" value="1"/>
</dbReference>
<name>HDFR_YERE8</name>
<evidence type="ECO:0000255" key="1">
    <source>
        <dbReference type="HAMAP-Rule" id="MF_01233"/>
    </source>
</evidence>
<evidence type="ECO:0000305" key="2"/>
<reference key="1">
    <citation type="journal article" date="2006" name="PLoS Genet.">
        <title>The complete genome sequence and comparative genome analysis of the high pathogenicity Yersinia enterocolitica strain 8081.</title>
        <authorList>
            <person name="Thomson N.R."/>
            <person name="Howard S."/>
            <person name="Wren B.W."/>
            <person name="Holden M.T.G."/>
            <person name="Crossman L."/>
            <person name="Challis G.L."/>
            <person name="Churcher C."/>
            <person name="Mungall K."/>
            <person name="Brooks K."/>
            <person name="Chillingworth T."/>
            <person name="Feltwell T."/>
            <person name="Abdellah Z."/>
            <person name="Hauser H."/>
            <person name="Jagels K."/>
            <person name="Maddison M."/>
            <person name="Moule S."/>
            <person name="Sanders M."/>
            <person name="Whitehead S."/>
            <person name="Quail M.A."/>
            <person name="Dougan G."/>
            <person name="Parkhill J."/>
            <person name="Prentice M.B."/>
        </authorList>
    </citation>
    <scope>NUCLEOTIDE SEQUENCE [LARGE SCALE GENOMIC DNA]</scope>
    <source>
        <strain>NCTC 13174 / 8081</strain>
    </source>
</reference>
<sequence>MDTELLKTFLEVSRTRHFGRAAESLYLTQSAVSFRIRQLENQLGANLFTRHRNNIRLTPAGERLLPYAETLMSTWQLAKKEVAHSLQHTELSIGATASLWEAYLTPWLQQLYKQRETLRLEARIALRQSLVKQLHERQLDLLITTEPPKMDELASLLLGHFSLRLFSSIPFELPEKTDDGTEHKNANEAPYIKLEWGADFHQQESRLLNSEQMPVLTTTSAHLTRQLLDTTGGCAFLPEHWQKEYPELVVNADIPPIVRPLYAVWLQNSDQQTLIRQLLKTPMNNAAQSAIRD</sequence>
<comment type="function">
    <text evidence="1">Negatively regulates the transcription of the flagellar master operon flhDC by binding to the upstream region of the operon.</text>
</comment>
<comment type="similarity">
    <text evidence="2">Belongs to the LysR transcriptional regulatory family.</text>
</comment>
<feature type="chain" id="PRO_1000066901" description="HTH-type transcriptional regulator HdfR">
    <location>
        <begin position="1"/>
        <end position="293"/>
    </location>
</feature>
<feature type="domain" description="HTH lysR-type" evidence="1">
    <location>
        <begin position="1"/>
        <end position="58"/>
    </location>
</feature>
<feature type="DNA-binding region" description="H-T-H motif" evidence="1">
    <location>
        <begin position="18"/>
        <end position="37"/>
    </location>
</feature>
<accession>A1JI47</accession>
<keyword id="KW-0238">DNA-binding</keyword>
<keyword id="KW-0678">Repressor</keyword>
<keyword id="KW-0804">Transcription</keyword>
<keyword id="KW-0805">Transcription regulation</keyword>
<protein>
    <recommendedName>
        <fullName evidence="1">HTH-type transcriptional regulator HdfR</fullName>
    </recommendedName>
    <alternativeName>
        <fullName evidence="1">H-NS-dependent flhDC regulator</fullName>
    </alternativeName>
</protein>